<reference key="1">
    <citation type="journal article" date="1992" name="Plant Cell">
        <title>Acquired resistance in Arabidopsis.</title>
        <authorList>
            <person name="Uknes S."/>
            <person name="Mauch-Mani B."/>
            <person name="Moyer M."/>
            <person name="Potter S."/>
            <person name="Williams S."/>
            <person name="Dincher S."/>
            <person name="Chandler D."/>
            <person name="Slusarenko A."/>
            <person name="Ward E."/>
            <person name="Ryals J."/>
        </authorList>
    </citation>
    <scope>NUCLEOTIDE SEQUENCE [MRNA]</scope>
    <scope>PARTIAL PROTEIN SEQUENCE</scope>
    <source>
        <strain>cv. Landsberg erecta</strain>
        <tissue>Leaf</tissue>
    </source>
</reference>
<reference key="2">
    <citation type="journal article" date="1999" name="Nature">
        <title>Sequence and analysis of chromosome 2 of the plant Arabidopsis thaliana.</title>
        <authorList>
            <person name="Lin X."/>
            <person name="Kaul S."/>
            <person name="Rounsley S.D."/>
            <person name="Shea T.P."/>
            <person name="Benito M.-I."/>
            <person name="Town C.D."/>
            <person name="Fujii C.Y."/>
            <person name="Mason T.M."/>
            <person name="Bowman C.L."/>
            <person name="Barnstead M.E."/>
            <person name="Feldblyum T.V."/>
            <person name="Buell C.R."/>
            <person name="Ketchum K.A."/>
            <person name="Lee J.J."/>
            <person name="Ronning C.M."/>
            <person name="Koo H.L."/>
            <person name="Moffat K.S."/>
            <person name="Cronin L.A."/>
            <person name="Shen M."/>
            <person name="Pai G."/>
            <person name="Van Aken S."/>
            <person name="Umayam L."/>
            <person name="Tallon L.J."/>
            <person name="Gill J.E."/>
            <person name="Adams M.D."/>
            <person name="Carrera A.J."/>
            <person name="Creasy T.H."/>
            <person name="Goodman H.M."/>
            <person name="Somerville C.R."/>
            <person name="Copenhaver G.P."/>
            <person name="Preuss D."/>
            <person name="Nierman W.C."/>
            <person name="White O."/>
            <person name="Eisen J.A."/>
            <person name="Salzberg S.L."/>
            <person name="Fraser C.M."/>
            <person name="Venter J.C."/>
        </authorList>
    </citation>
    <scope>NUCLEOTIDE SEQUENCE [LARGE SCALE GENOMIC DNA]</scope>
    <source>
        <strain>cv. Columbia</strain>
    </source>
</reference>
<reference key="3">
    <citation type="journal article" date="2017" name="Plant J.">
        <title>Araport11: a complete reannotation of the Arabidopsis thaliana reference genome.</title>
        <authorList>
            <person name="Cheng C.Y."/>
            <person name="Krishnakumar V."/>
            <person name="Chan A.P."/>
            <person name="Thibaud-Nissen F."/>
            <person name="Schobel S."/>
            <person name="Town C.D."/>
        </authorList>
    </citation>
    <scope>GENOME REANNOTATION</scope>
    <source>
        <strain>cv. Columbia</strain>
    </source>
</reference>
<reference key="4">
    <citation type="journal article" date="2006" name="Plant Biotechnol. J.">
        <title>Simultaneous high-throughput recombinational cloning of open reading frames in closed and open configurations.</title>
        <authorList>
            <person name="Underwood B.A."/>
            <person name="Vanderhaeghen R."/>
            <person name="Whitford R."/>
            <person name="Town C.D."/>
            <person name="Hilson P."/>
        </authorList>
    </citation>
    <scope>NUCLEOTIDE SEQUENCE [LARGE SCALE GENOMIC DNA]</scope>
    <source>
        <strain>cv. Columbia</strain>
    </source>
</reference>
<reference key="5">
    <citation type="journal article" date="2003" name="Science">
        <title>Empirical analysis of transcriptional activity in the Arabidopsis genome.</title>
        <authorList>
            <person name="Yamada K."/>
            <person name="Lim J."/>
            <person name="Dale J.M."/>
            <person name="Chen H."/>
            <person name="Shinn P."/>
            <person name="Palm C.J."/>
            <person name="Southwick A.M."/>
            <person name="Wu H.C."/>
            <person name="Kim C.J."/>
            <person name="Nguyen M."/>
            <person name="Pham P.K."/>
            <person name="Cheuk R.F."/>
            <person name="Karlin-Newmann G."/>
            <person name="Liu S.X."/>
            <person name="Lam B."/>
            <person name="Sakano H."/>
            <person name="Wu T."/>
            <person name="Yu G."/>
            <person name="Miranda M."/>
            <person name="Quach H.L."/>
            <person name="Tripp M."/>
            <person name="Chang C.H."/>
            <person name="Lee J.M."/>
            <person name="Toriumi M.J."/>
            <person name="Chan M.M."/>
            <person name="Tang C.C."/>
            <person name="Onodera C.S."/>
            <person name="Deng J.M."/>
            <person name="Akiyama K."/>
            <person name="Ansari Y."/>
            <person name="Arakawa T."/>
            <person name="Banh J."/>
            <person name="Banno F."/>
            <person name="Bowser L."/>
            <person name="Brooks S.Y."/>
            <person name="Carninci P."/>
            <person name="Chao Q."/>
            <person name="Choy N."/>
            <person name="Enju A."/>
            <person name="Goldsmith A.D."/>
            <person name="Gurjal M."/>
            <person name="Hansen N.F."/>
            <person name="Hayashizaki Y."/>
            <person name="Johnson-Hopson C."/>
            <person name="Hsuan V.W."/>
            <person name="Iida K."/>
            <person name="Karnes M."/>
            <person name="Khan S."/>
            <person name="Koesema E."/>
            <person name="Ishida J."/>
            <person name="Jiang P.X."/>
            <person name="Jones T."/>
            <person name="Kawai J."/>
            <person name="Kamiya A."/>
            <person name="Meyers C."/>
            <person name="Nakajima M."/>
            <person name="Narusaka M."/>
            <person name="Seki M."/>
            <person name="Sakurai T."/>
            <person name="Satou M."/>
            <person name="Tamse R."/>
            <person name="Vaysberg M."/>
            <person name="Wallender E.K."/>
            <person name="Wong C."/>
            <person name="Yamamura Y."/>
            <person name="Yuan S."/>
            <person name="Shinozaki K."/>
            <person name="Davis R.W."/>
            <person name="Theologis A."/>
            <person name="Ecker J.R."/>
        </authorList>
    </citation>
    <scope>NUCLEOTIDE SEQUENCE [LARGE SCALE MRNA]</scope>
    <source>
        <strain>cv. Columbia</strain>
    </source>
</reference>
<organism>
    <name type="scientific">Arabidopsis thaliana</name>
    <name type="common">Mouse-ear cress</name>
    <dbReference type="NCBI Taxonomy" id="3702"/>
    <lineage>
        <taxon>Eukaryota</taxon>
        <taxon>Viridiplantae</taxon>
        <taxon>Streptophyta</taxon>
        <taxon>Embryophyta</taxon>
        <taxon>Tracheophyta</taxon>
        <taxon>Spermatophyta</taxon>
        <taxon>Magnoliopsida</taxon>
        <taxon>eudicotyledons</taxon>
        <taxon>Gunneridae</taxon>
        <taxon>Pentapetalae</taxon>
        <taxon>rosids</taxon>
        <taxon>malvids</taxon>
        <taxon>Brassicales</taxon>
        <taxon>Brassicaceae</taxon>
        <taxon>Camelineae</taxon>
        <taxon>Arabidopsis</taxon>
    </lineage>
</organism>
<name>PR1_ARATH</name>
<evidence type="ECO:0000250" key="1"/>
<evidence type="ECO:0000255" key="2"/>
<evidence type="ECO:0000305" key="3"/>
<protein>
    <recommendedName>
        <fullName>Pathogenesis-related protein 1</fullName>
        <shortName>PR-1</shortName>
    </recommendedName>
</protein>
<dbReference type="EMBL" id="M90508">
    <property type="protein sequence ID" value="AAA32863.1"/>
    <property type="molecule type" value="mRNA"/>
</dbReference>
<dbReference type="EMBL" id="AC005398">
    <property type="protein sequence ID" value="AAC69381.1"/>
    <property type="molecule type" value="Genomic_DNA"/>
</dbReference>
<dbReference type="EMBL" id="CP002685">
    <property type="protein sequence ID" value="AEC06314.1"/>
    <property type="molecule type" value="Genomic_DNA"/>
</dbReference>
<dbReference type="EMBL" id="DQ446496">
    <property type="protein sequence ID" value="ABE65442.1"/>
    <property type="molecule type" value="Genomic_DNA"/>
</dbReference>
<dbReference type="EMBL" id="AY064023">
    <property type="protein sequence ID" value="AAL36379.1"/>
    <property type="molecule type" value="mRNA"/>
</dbReference>
<dbReference type="EMBL" id="AY117187">
    <property type="protein sequence ID" value="AAM51262.1"/>
    <property type="molecule type" value="mRNA"/>
</dbReference>
<dbReference type="PIR" id="JQ1693">
    <property type="entry name" value="JQ1693"/>
</dbReference>
<dbReference type="SMR" id="P33154"/>
<dbReference type="FunCoup" id="P33154">
    <property type="interactions" value="665"/>
</dbReference>
<dbReference type="STRING" id="3702.P33154"/>
<dbReference type="PaxDb" id="3702-AT2G14610.1"/>
<dbReference type="ProteomicsDB" id="226319"/>
<dbReference type="EnsemblPlants" id="AT2G14610.1">
    <property type="protein sequence ID" value="AT2G14610.1"/>
    <property type="gene ID" value="AT2G14610"/>
</dbReference>
<dbReference type="GeneID" id="815949"/>
<dbReference type="Gramene" id="AT2G14610.1">
    <property type="protein sequence ID" value="AT2G14610.1"/>
    <property type="gene ID" value="AT2G14610"/>
</dbReference>
<dbReference type="KEGG" id="ath:AT2G14610"/>
<dbReference type="Araport" id="AT2G14610"/>
<dbReference type="TAIR" id="AT2G14610">
    <property type="gene designation" value="PR1"/>
</dbReference>
<dbReference type="eggNOG" id="KOG3017">
    <property type="taxonomic scope" value="Eukaryota"/>
</dbReference>
<dbReference type="HOGENOM" id="CLU_035730_8_1_1"/>
<dbReference type="InParanoid" id="P33154"/>
<dbReference type="OMA" id="YASNTCI"/>
<dbReference type="OrthoDB" id="6507808at2759"/>
<dbReference type="PhylomeDB" id="P33154"/>
<dbReference type="PRO" id="PR:P33154"/>
<dbReference type="Proteomes" id="UP000006548">
    <property type="component" value="Chromosome 2"/>
</dbReference>
<dbReference type="ExpressionAtlas" id="P33154">
    <property type="expression patterns" value="baseline and differential"/>
</dbReference>
<dbReference type="GO" id="GO:0048046">
    <property type="term" value="C:apoplast"/>
    <property type="evidence" value="ECO:0007669"/>
    <property type="project" value="UniProtKB-SubCell"/>
</dbReference>
<dbReference type="GO" id="GO:0099503">
    <property type="term" value="C:secretory vesicle"/>
    <property type="evidence" value="ECO:0007005"/>
    <property type="project" value="TAIR"/>
</dbReference>
<dbReference type="GO" id="GO:0006952">
    <property type="term" value="P:defense response"/>
    <property type="evidence" value="ECO:0000304"/>
    <property type="project" value="TAIR"/>
</dbReference>
<dbReference type="GO" id="GO:0010266">
    <property type="term" value="P:response to vitamin B1"/>
    <property type="evidence" value="ECO:0000270"/>
    <property type="project" value="TAIR"/>
</dbReference>
<dbReference type="GO" id="GO:0009414">
    <property type="term" value="P:response to water deprivation"/>
    <property type="evidence" value="ECO:0000270"/>
    <property type="project" value="TAIR"/>
</dbReference>
<dbReference type="GO" id="GO:0009627">
    <property type="term" value="P:systemic acquired resistance"/>
    <property type="evidence" value="ECO:0000270"/>
    <property type="project" value="TAIR"/>
</dbReference>
<dbReference type="CDD" id="cd05381">
    <property type="entry name" value="CAP_PR-1"/>
    <property type="match status" value="1"/>
</dbReference>
<dbReference type="FunFam" id="3.40.33.10:FF:000006">
    <property type="entry name" value="Putative pathogenesis-related protein 1"/>
    <property type="match status" value="1"/>
</dbReference>
<dbReference type="Gene3D" id="3.40.33.10">
    <property type="entry name" value="CAP"/>
    <property type="match status" value="1"/>
</dbReference>
<dbReference type="InterPro" id="IPR018244">
    <property type="entry name" value="Allrgn_V5/Tpx1_CS"/>
</dbReference>
<dbReference type="InterPro" id="IPR014044">
    <property type="entry name" value="CAP_dom"/>
</dbReference>
<dbReference type="InterPro" id="IPR035940">
    <property type="entry name" value="CAP_sf"/>
</dbReference>
<dbReference type="InterPro" id="IPR001283">
    <property type="entry name" value="CRISP-related"/>
</dbReference>
<dbReference type="PANTHER" id="PTHR10334">
    <property type="entry name" value="CYSTEINE-RICH SECRETORY PROTEIN-RELATED"/>
    <property type="match status" value="1"/>
</dbReference>
<dbReference type="Pfam" id="PF00188">
    <property type="entry name" value="CAP"/>
    <property type="match status" value="1"/>
</dbReference>
<dbReference type="PRINTS" id="PR00837">
    <property type="entry name" value="V5TPXLIKE"/>
</dbReference>
<dbReference type="SMART" id="SM00198">
    <property type="entry name" value="SCP"/>
    <property type="match status" value="1"/>
</dbReference>
<dbReference type="SUPFAM" id="SSF55797">
    <property type="entry name" value="PR-1-like"/>
    <property type="match status" value="1"/>
</dbReference>
<dbReference type="PROSITE" id="PS01009">
    <property type="entry name" value="CRISP_1"/>
    <property type="match status" value="1"/>
</dbReference>
<dbReference type="PROSITE" id="PS01010">
    <property type="entry name" value="CRISP_2"/>
    <property type="match status" value="1"/>
</dbReference>
<accession>P33154</accession>
<accession>Q1PF70</accession>
<keyword id="KW-0052">Apoplast</keyword>
<keyword id="KW-0903">Direct protein sequencing</keyword>
<keyword id="KW-1015">Disulfide bond</keyword>
<keyword id="KW-0568">Pathogenesis-related protein</keyword>
<keyword id="KW-0611">Plant defense</keyword>
<keyword id="KW-1185">Reference proteome</keyword>
<keyword id="KW-0964">Secreted</keyword>
<keyword id="KW-0732">Signal</keyword>
<gene>
    <name type="ordered locus">At2g14610</name>
    <name type="ORF">T6B13.15</name>
</gene>
<sequence length="161" mass="17677">MNFTGYSRFLIVFVALVGALVLPSKAQDSPQDYLRVHNQARGAVGVGPMQWDERVAAYARSYAEQLRGNCRLIHSGGPYGENLAWGSGDLSGVSAVNMWVSEKANYNYAANTCNGVCGHYTQVVWRKSVRLGCAKVRCNNGGTIISCNYDPRGNYVNEKPY</sequence>
<feature type="signal peptide" evidence="2">
    <location>
        <begin position="1"/>
        <end position="26"/>
    </location>
</feature>
<feature type="chain" id="PRO_0000006304" description="Pathogenesis-related protein 1">
    <location>
        <begin position="27"/>
        <end position="161"/>
    </location>
</feature>
<feature type="domain" description="SCP">
    <location>
        <begin position="34"/>
        <end position="149"/>
    </location>
</feature>
<feature type="disulfide bond" evidence="1">
    <location>
        <begin position="70"/>
        <end position="138"/>
    </location>
</feature>
<feature type="disulfide bond" evidence="1">
    <location>
        <begin position="113"/>
        <end position="117"/>
    </location>
</feature>
<feature type="disulfide bond" evidence="1">
    <location>
        <begin position="133"/>
        <end position="147"/>
    </location>
</feature>
<proteinExistence type="evidence at protein level"/>
<comment type="function">
    <text>Partially responsible for acquired pathogen resistance.</text>
</comment>
<comment type="subcellular location">
    <subcellularLocation>
        <location>Secreted</location>
        <location>Extracellular space</location>
        <location>Apoplast</location>
    </subcellularLocation>
</comment>
<comment type="induction">
    <text>By 2,6-dichloroisonicotinic acid (INA) and salicylic acid (possibly an endogenous signal for acquired resistance). Strongly induced by pathogen infection.</text>
</comment>
<comment type="similarity">
    <text evidence="3">Belongs to the CRISP family.</text>
</comment>